<feature type="signal peptide" evidence="1">
    <location>
        <begin position="1"/>
        <end position="22"/>
    </location>
</feature>
<feature type="chain" id="PRO_0000254112" description="Coiled-coil domain-containing protein 134">
    <location>
        <begin position="23"/>
        <end position="229"/>
    </location>
</feature>
<feature type="region of interest" description="Disordered" evidence="3">
    <location>
        <begin position="201"/>
        <end position="229"/>
    </location>
</feature>
<feature type="coiled-coil region" evidence="2">
    <location>
        <begin position="192"/>
        <end position="218"/>
    </location>
</feature>
<feature type="short sequence motif" description="Prevents secretion from ER" evidence="1">
    <location>
        <begin position="226"/>
        <end position="229"/>
    </location>
</feature>
<feature type="compositionally biased region" description="Basic residues" evidence="3">
    <location>
        <begin position="219"/>
        <end position="229"/>
    </location>
</feature>
<name>CC134_XENTR</name>
<evidence type="ECO:0000250" key="1">
    <source>
        <dbReference type="UniProtKB" id="Q9H6E4"/>
    </source>
</evidence>
<evidence type="ECO:0000255" key="2"/>
<evidence type="ECO:0000256" key="3">
    <source>
        <dbReference type="SAM" id="MobiDB-lite"/>
    </source>
</evidence>
<evidence type="ECO:0000305" key="4"/>
<comment type="function">
    <text evidence="1">Molecular adapter required to prevent protein hyperglycosylation of HSP90B1: during translation, associates with nascent HSP90B1 and the STT3A catalytic component of the OST-A complex and tethers them to a specialized translocon that forms a microenvironment for HSP90B1 folding. In the CCDC134-containing translocon, STT3A associates with the SRT pseudosubstrate motif of HSP90B1, preventing access to facultative glycosylation sites until folding is completed, preventing hyperglycosylation and subsequent degradation of HSP90B1.</text>
</comment>
<comment type="subcellular location">
    <subcellularLocation>
        <location evidence="1">Endoplasmic reticulum lumen</location>
    </subcellularLocation>
</comment>
<comment type="similarity">
    <text evidence="4">Belongs to the CCDC134 family.</text>
</comment>
<organism>
    <name type="scientific">Xenopus tropicalis</name>
    <name type="common">Western clawed frog</name>
    <name type="synonym">Silurana tropicalis</name>
    <dbReference type="NCBI Taxonomy" id="8364"/>
    <lineage>
        <taxon>Eukaryota</taxon>
        <taxon>Metazoa</taxon>
        <taxon>Chordata</taxon>
        <taxon>Craniata</taxon>
        <taxon>Vertebrata</taxon>
        <taxon>Euteleostomi</taxon>
        <taxon>Amphibia</taxon>
        <taxon>Batrachia</taxon>
        <taxon>Anura</taxon>
        <taxon>Pipoidea</taxon>
        <taxon>Pipidae</taxon>
        <taxon>Xenopodinae</taxon>
        <taxon>Xenopus</taxon>
        <taxon>Silurana</taxon>
    </lineage>
</organism>
<protein>
    <recommendedName>
        <fullName>Coiled-coil domain-containing protein 134</fullName>
    </recommendedName>
</protein>
<proteinExistence type="evidence at transcript level"/>
<accession>Q28F39</accession>
<accession>A4II25</accession>
<gene>
    <name type="primary">ccdc134</name>
    <name type="ORF">TGas125o12.1</name>
</gene>
<sequence length="229" mass="26526">MDPVQLLSFLLALLLPLGTALDASKQKRDTAFEIYKKLFEVKRKDQINALNNLIELNDVNQQYKIIDIMLKGLFKVLEDSRAILIAAGVQPDGPFPEDEKIKDAYSHTVENSAFFGDVVLRFPKIVHHYFDRNSNWNNLIRWGIGFCNLSGIFDDGPHTQLLGLMSQELGISEKSPDYKNPFKMDNMEFLPNTDAFQKALREEEKRRRKEEKRKEIRKGPRITRSRSEL</sequence>
<reference key="1">
    <citation type="submission" date="2006-06" db="EMBL/GenBank/DDBJ databases">
        <authorList>
            <consortium name="Sanger Xenopus tropicalis EST/cDNA project"/>
        </authorList>
    </citation>
    <scope>NUCLEOTIDE SEQUENCE [LARGE SCALE MRNA]</scope>
    <source>
        <tissue>Gastrula</tissue>
    </source>
</reference>
<reference key="2">
    <citation type="submission" date="2007-03" db="EMBL/GenBank/DDBJ databases">
        <authorList>
            <consortium name="NIH - Xenopus Gene Collection (XGC) project"/>
        </authorList>
    </citation>
    <scope>NUCLEOTIDE SEQUENCE [LARGE SCALE MRNA]</scope>
    <source>
        <tissue>Embryo</tissue>
    </source>
</reference>
<dbReference type="EMBL" id="CR762184">
    <property type="protein sequence ID" value="CAJ81636.1"/>
    <property type="molecule type" value="mRNA"/>
</dbReference>
<dbReference type="EMBL" id="BC135813">
    <property type="protein sequence ID" value="AAI35814.1"/>
    <property type="molecule type" value="mRNA"/>
</dbReference>
<dbReference type="RefSeq" id="NP_001016089.1">
    <property type="nucleotide sequence ID" value="NM_001016089.3"/>
</dbReference>
<dbReference type="RefSeq" id="XP_012816504.1">
    <property type="nucleotide sequence ID" value="XM_012961050.3"/>
</dbReference>
<dbReference type="FunCoup" id="Q28F39">
    <property type="interactions" value="1322"/>
</dbReference>
<dbReference type="STRING" id="8364.ENSXETP00000023784"/>
<dbReference type="PaxDb" id="8364-ENSXETP00000037938"/>
<dbReference type="GeneID" id="548843"/>
<dbReference type="KEGG" id="xtr:548843"/>
<dbReference type="AGR" id="Xenbase:XB-GENE-951215"/>
<dbReference type="CTD" id="79879"/>
<dbReference type="Xenbase" id="XB-GENE-951215">
    <property type="gene designation" value="ccdc134"/>
</dbReference>
<dbReference type="eggNOG" id="ENOG502QVE7">
    <property type="taxonomic scope" value="Eukaryota"/>
</dbReference>
<dbReference type="HOGENOM" id="CLU_099195_0_0_1"/>
<dbReference type="InParanoid" id="Q28F39"/>
<dbReference type="OMA" id="GIGFCNQ"/>
<dbReference type="OrthoDB" id="5854099at2759"/>
<dbReference type="PhylomeDB" id="Q28F39"/>
<dbReference type="TreeFam" id="TF323839"/>
<dbReference type="Proteomes" id="UP000008143">
    <property type="component" value="Chromosome 4"/>
</dbReference>
<dbReference type="Bgee" id="ENSXETG00000017448">
    <property type="expression patterns" value="Expressed in brain and 15 other cell types or tissues"/>
</dbReference>
<dbReference type="GO" id="GO:0005788">
    <property type="term" value="C:endoplasmic reticulum lumen"/>
    <property type="evidence" value="ECO:0000250"/>
    <property type="project" value="UniProtKB"/>
</dbReference>
<dbReference type="GO" id="GO:0005576">
    <property type="term" value="C:extracellular region"/>
    <property type="evidence" value="ECO:0007669"/>
    <property type="project" value="UniProtKB-KW"/>
</dbReference>
<dbReference type="GO" id="GO:0005634">
    <property type="term" value="C:nucleus"/>
    <property type="evidence" value="ECO:0007669"/>
    <property type="project" value="UniProtKB-KW"/>
</dbReference>
<dbReference type="GO" id="GO:0030674">
    <property type="term" value="F:protein-macromolecule adaptor activity"/>
    <property type="evidence" value="ECO:0000250"/>
    <property type="project" value="UniProtKB"/>
</dbReference>
<dbReference type="GO" id="GO:0034126">
    <property type="term" value="P:positive regulation of MyD88-dependent toll-like receptor signaling pathway"/>
    <property type="evidence" value="ECO:0000250"/>
    <property type="project" value="UniProtKB"/>
</dbReference>
<dbReference type="GO" id="GO:0030177">
    <property type="term" value="P:positive regulation of Wnt signaling pathway"/>
    <property type="evidence" value="ECO:0000250"/>
    <property type="project" value="UniProtKB"/>
</dbReference>
<dbReference type="GO" id="GO:0060049">
    <property type="term" value="P:regulation of protein glycosylation"/>
    <property type="evidence" value="ECO:0000250"/>
    <property type="project" value="UniProtKB"/>
</dbReference>
<dbReference type="InterPro" id="IPR026321">
    <property type="entry name" value="Coiled-coil_dom_con_pro_134"/>
</dbReference>
<dbReference type="PANTHER" id="PTHR14735">
    <property type="entry name" value="COILED-COIL DOMAIN-CONTAINING PROTEIN 134"/>
    <property type="match status" value="1"/>
</dbReference>
<dbReference type="PANTHER" id="PTHR14735:SF1">
    <property type="entry name" value="COILED-COIL DOMAIN-CONTAINING PROTEIN 134"/>
    <property type="match status" value="1"/>
</dbReference>
<dbReference type="Pfam" id="PF15002">
    <property type="entry name" value="ERK-JNK_inhib"/>
    <property type="match status" value="1"/>
</dbReference>
<keyword id="KW-0175">Coiled coil</keyword>
<keyword id="KW-0256">Endoplasmic reticulum</keyword>
<keyword id="KW-1185">Reference proteome</keyword>
<keyword id="KW-0732">Signal</keyword>